<proteinExistence type="inferred from homology"/>
<organism>
    <name type="scientific">Psychrobacter cryohalolentis (strain ATCC BAA-1226 / DSM 17306 / VKM B-2378 / K5)</name>
    <dbReference type="NCBI Taxonomy" id="335284"/>
    <lineage>
        <taxon>Bacteria</taxon>
        <taxon>Pseudomonadati</taxon>
        <taxon>Pseudomonadota</taxon>
        <taxon>Gammaproteobacteria</taxon>
        <taxon>Moraxellales</taxon>
        <taxon>Moraxellaceae</taxon>
        <taxon>Psychrobacter</taxon>
    </lineage>
</organism>
<keyword id="KW-0012">Acyltransferase</keyword>
<keyword id="KW-0963">Cytoplasm</keyword>
<keyword id="KW-0441">Lipid A biosynthesis</keyword>
<keyword id="KW-0444">Lipid biosynthesis</keyword>
<keyword id="KW-0443">Lipid metabolism</keyword>
<keyword id="KW-0677">Repeat</keyword>
<keyword id="KW-0808">Transferase</keyword>
<feature type="chain" id="PRO_0000302593" description="Acyl-[acyl-carrier-protein]--UDP-N-acetylglucosamine O-acyltransferase">
    <location>
        <begin position="1"/>
        <end position="259"/>
    </location>
</feature>
<comment type="function">
    <text evidence="1">Involved in the biosynthesis of lipid A, a phosphorylated glycolipid that anchors the lipopolysaccharide to the outer membrane of the cell.</text>
</comment>
<comment type="catalytic activity">
    <reaction evidence="1">
        <text>a (3R)-hydroxyacyl-[ACP] + UDP-N-acetyl-alpha-D-glucosamine = a UDP-3-O-[(3R)-3-hydroxyacyl]-N-acetyl-alpha-D-glucosamine + holo-[ACP]</text>
        <dbReference type="Rhea" id="RHEA:67812"/>
        <dbReference type="Rhea" id="RHEA-COMP:9685"/>
        <dbReference type="Rhea" id="RHEA-COMP:9945"/>
        <dbReference type="ChEBI" id="CHEBI:57705"/>
        <dbReference type="ChEBI" id="CHEBI:64479"/>
        <dbReference type="ChEBI" id="CHEBI:78827"/>
        <dbReference type="ChEBI" id="CHEBI:173225"/>
        <dbReference type="EC" id="2.3.1.129"/>
    </reaction>
</comment>
<comment type="pathway">
    <text evidence="1">Glycolipid biosynthesis; lipid IV(A) biosynthesis; lipid IV(A) from (3R)-3-hydroxytetradecanoyl-[acyl-carrier-protein] and UDP-N-acetyl-alpha-D-glucosamine: step 1/6.</text>
</comment>
<comment type="subunit">
    <text evidence="1">Homotrimer.</text>
</comment>
<comment type="subcellular location">
    <subcellularLocation>
        <location evidence="1">Cytoplasm</location>
    </subcellularLocation>
</comment>
<comment type="similarity">
    <text evidence="1">Belongs to the transferase hexapeptide repeat family. LpxA subfamily.</text>
</comment>
<name>LPXA_PSYCK</name>
<gene>
    <name evidence="1" type="primary">lpxA</name>
    <name type="ordered locus">Pcryo_1705</name>
</gene>
<evidence type="ECO:0000255" key="1">
    <source>
        <dbReference type="HAMAP-Rule" id="MF_00387"/>
    </source>
</evidence>
<reference key="1">
    <citation type="submission" date="2006-03" db="EMBL/GenBank/DDBJ databases">
        <title>Complete sequence of chromosome of Psychrobacter cryohalolentis K5.</title>
        <authorList>
            <consortium name="US DOE Joint Genome Institute"/>
            <person name="Copeland A."/>
            <person name="Lucas S."/>
            <person name="Lapidus A."/>
            <person name="Barry K."/>
            <person name="Detter J.C."/>
            <person name="Glavina T."/>
            <person name="Hammon N."/>
            <person name="Israni S."/>
            <person name="Dalin E."/>
            <person name="Tice H."/>
            <person name="Pitluck S."/>
            <person name="Brettin T."/>
            <person name="Bruce D."/>
            <person name="Han C."/>
            <person name="Tapia R."/>
            <person name="Sims D.R."/>
            <person name="Gilna P."/>
            <person name="Schmutz J."/>
            <person name="Larimer F."/>
            <person name="Land M."/>
            <person name="Hauser L."/>
            <person name="Kyrpides N."/>
            <person name="Kim E."/>
            <person name="Richardson P."/>
        </authorList>
    </citation>
    <scope>NUCLEOTIDE SEQUENCE [LARGE SCALE GENOMIC DNA]</scope>
    <source>
        <strain>ATCC BAA-1226 / DSM 17306 / VKM B-2378 / K5</strain>
    </source>
</reference>
<dbReference type="EC" id="2.3.1.129" evidence="1"/>
<dbReference type="EMBL" id="CP000323">
    <property type="protein sequence ID" value="ABE75482.1"/>
    <property type="molecule type" value="Genomic_DNA"/>
</dbReference>
<dbReference type="RefSeq" id="WP_011514030.1">
    <property type="nucleotide sequence ID" value="NC_007969.1"/>
</dbReference>
<dbReference type="SMR" id="Q1QA21"/>
<dbReference type="STRING" id="335284.Pcryo_1705"/>
<dbReference type="KEGG" id="pcr:Pcryo_1705"/>
<dbReference type="eggNOG" id="COG1043">
    <property type="taxonomic scope" value="Bacteria"/>
</dbReference>
<dbReference type="HOGENOM" id="CLU_061249_0_0_6"/>
<dbReference type="UniPathway" id="UPA00359">
    <property type="reaction ID" value="UER00477"/>
</dbReference>
<dbReference type="Proteomes" id="UP000002425">
    <property type="component" value="Chromosome"/>
</dbReference>
<dbReference type="GO" id="GO:0005737">
    <property type="term" value="C:cytoplasm"/>
    <property type="evidence" value="ECO:0007669"/>
    <property type="project" value="UniProtKB-SubCell"/>
</dbReference>
<dbReference type="GO" id="GO:0016020">
    <property type="term" value="C:membrane"/>
    <property type="evidence" value="ECO:0007669"/>
    <property type="project" value="GOC"/>
</dbReference>
<dbReference type="GO" id="GO:0008780">
    <property type="term" value="F:acyl-[acyl-carrier-protein]-UDP-N-acetylglucosamine O-acyltransferase activity"/>
    <property type="evidence" value="ECO:0007669"/>
    <property type="project" value="UniProtKB-UniRule"/>
</dbReference>
<dbReference type="GO" id="GO:0009245">
    <property type="term" value="P:lipid A biosynthetic process"/>
    <property type="evidence" value="ECO:0007669"/>
    <property type="project" value="UniProtKB-UniRule"/>
</dbReference>
<dbReference type="CDD" id="cd03351">
    <property type="entry name" value="LbH_UDP-GlcNAc_AT"/>
    <property type="match status" value="1"/>
</dbReference>
<dbReference type="Gene3D" id="2.160.10.10">
    <property type="entry name" value="Hexapeptide repeat proteins"/>
    <property type="match status" value="1"/>
</dbReference>
<dbReference type="Gene3D" id="1.20.1180.10">
    <property type="entry name" value="Udp N-acetylglucosamine O-acyltransferase, C-terminal domain"/>
    <property type="match status" value="1"/>
</dbReference>
<dbReference type="HAMAP" id="MF_00387">
    <property type="entry name" value="LpxA"/>
    <property type="match status" value="1"/>
</dbReference>
<dbReference type="InterPro" id="IPR029098">
    <property type="entry name" value="Acetyltransf_C"/>
</dbReference>
<dbReference type="InterPro" id="IPR037157">
    <property type="entry name" value="Acetyltransf_C_sf"/>
</dbReference>
<dbReference type="InterPro" id="IPR001451">
    <property type="entry name" value="Hexapep"/>
</dbReference>
<dbReference type="InterPro" id="IPR018357">
    <property type="entry name" value="Hexapep_transf_CS"/>
</dbReference>
<dbReference type="InterPro" id="IPR010137">
    <property type="entry name" value="Lipid_A_LpxA"/>
</dbReference>
<dbReference type="InterPro" id="IPR011004">
    <property type="entry name" value="Trimer_LpxA-like_sf"/>
</dbReference>
<dbReference type="NCBIfam" id="TIGR01852">
    <property type="entry name" value="lipid_A_lpxA"/>
    <property type="match status" value="1"/>
</dbReference>
<dbReference type="NCBIfam" id="NF003657">
    <property type="entry name" value="PRK05289.1"/>
    <property type="match status" value="1"/>
</dbReference>
<dbReference type="PANTHER" id="PTHR43480">
    <property type="entry name" value="ACYL-[ACYL-CARRIER-PROTEIN]--UDP-N-ACETYLGLUCOSAMINE O-ACYLTRANSFERASE"/>
    <property type="match status" value="1"/>
</dbReference>
<dbReference type="PANTHER" id="PTHR43480:SF1">
    <property type="entry name" value="ACYL-[ACYL-CARRIER-PROTEIN]--UDP-N-ACETYLGLUCOSAMINE O-ACYLTRANSFERASE, MITOCHONDRIAL-RELATED"/>
    <property type="match status" value="1"/>
</dbReference>
<dbReference type="Pfam" id="PF13720">
    <property type="entry name" value="Acetyltransf_11"/>
    <property type="match status" value="1"/>
</dbReference>
<dbReference type="Pfam" id="PF00132">
    <property type="entry name" value="Hexapep"/>
    <property type="match status" value="1"/>
</dbReference>
<dbReference type="PIRSF" id="PIRSF000456">
    <property type="entry name" value="UDP-GlcNAc_acltr"/>
    <property type="match status" value="1"/>
</dbReference>
<dbReference type="SUPFAM" id="SSF51161">
    <property type="entry name" value="Trimeric LpxA-like enzymes"/>
    <property type="match status" value="1"/>
</dbReference>
<dbReference type="PROSITE" id="PS00101">
    <property type="entry name" value="HEXAPEP_TRANSFERASES"/>
    <property type="match status" value="2"/>
</dbReference>
<sequence length="259" mass="28292">MSQIHPTALISPSATIDKTATIGPYCIVGDEVTIGAHTVLHRHVVVTRLTRIGEYNQFYQFSSIGEDPQDLKYAGERTWLEIGDHNTIREACSLHRGTEQDGGLTKIGNHNLLMVNTHVAHDCLIGDHNVLANNVGVAGHVTIGNHIIVGGNSGIHQFCTIDDYSLVGGATLVLKDVAAFTMVSGNPAKAHGLNIEGMRRKGWSKDSIDVLRQAYRVVFRSGLTTVQALEVLKQDLLPKESKIEFLIDSLQKSRRGVVR</sequence>
<accession>Q1QA21</accession>
<protein>
    <recommendedName>
        <fullName evidence="1">Acyl-[acyl-carrier-protein]--UDP-N-acetylglucosamine O-acyltransferase</fullName>
        <shortName evidence="1">UDP-N-acetylglucosamine acyltransferase</shortName>
        <ecNumber evidence="1">2.3.1.129</ecNumber>
    </recommendedName>
</protein>